<dbReference type="EC" id="2.5.1.15"/>
<dbReference type="EMBL" id="CP000003">
    <property type="protein sequence ID" value="AAT86955.1"/>
    <property type="molecule type" value="Genomic_DNA"/>
</dbReference>
<dbReference type="RefSeq" id="WP_011184486.1">
    <property type="nucleotide sequence ID" value="NC_006086.1"/>
</dbReference>
<dbReference type="SMR" id="Q5XCA8"/>
<dbReference type="KEGG" id="spa:M6_Spy0820"/>
<dbReference type="HOGENOM" id="CLU_008023_0_2_9"/>
<dbReference type="UniPathway" id="UPA00077">
    <property type="reaction ID" value="UER00156"/>
</dbReference>
<dbReference type="Proteomes" id="UP000001167">
    <property type="component" value="Chromosome"/>
</dbReference>
<dbReference type="GO" id="GO:0005829">
    <property type="term" value="C:cytosol"/>
    <property type="evidence" value="ECO:0007669"/>
    <property type="project" value="TreeGrafter"/>
</dbReference>
<dbReference type="GO" id="GO:0004156">
    <property type="term" value="F:dihydropteroate synthase activity"/>
    <property type="evidence" value="ECO:0007669"/>
    <property type="project" value="UniProtKB-EC"/>
</dbReference>
<dbReference type="GO" id="GO:0046872">
    <property type="term" value="F:metal ion binding"/>
    <property type="evidence" value="ECO:0007669"/>
    <property type="project" value="UniProtKB-KW"/>
</dbReference>
<dbReference type="GO" id="GO:0046656">
    <property type="term" value="P:folic acid biosynthetic process"/>
    <property type="evidence" value="ECO:0007669"/>
    <property type="project" value="UniProtKB-KW"/>
</dbReference>
<dbReference type="GO" id="GO:0046654">
    <property type="term" value="P:tetrahydrofolate biosynthetic process"/>
    <property type="evidence" value="ECO:0007669"/>
    <property type="project" value="UniProtKB-UniPathway"/>
</dbReference>
<dbReference type="CDD" id="cd00739">
    <property type="entry name" value="DHPS"/>
    <property type="match status" value="1"/>
</dbReference>
<dbReference type="FunFam" id="3.20.20.20:FF:000006">
    <property type="entry name" value="Dihydropteroate synthase"/>
    <property type="match status" value="1"/>
</dbReference>
<dbReference type="Gene3D" id="3.20.20.20">
    <property type="entry name" value="Dihydropteroate synthase-like"/>
    <property type="match status" value="1"/>
</dbReference>
<dbReference type="InterPro" id="IPR045031">
    <property type="entry name" value="DHP_synth-like"/>
</dbReference>
<dbReference type="InterPro" id="IPR006390">
    <property type="entry name" value="DHP_synth_dom"/>
</dbReference>
<dbReference type="InterPro" id="IPR011005">
    <property type="entry name" value="Dihydropteroate_synth-like_sf"/>
</dbReference>
<dbReference type="InterPro" id="IPR000489">
    <property type="entry name" value="Pterin-binding_dom"/>
</dbReference>
<dbReference type="NCBIfam" id="TIGR01496">
    <property type="entry name" value="DHPS"/>
    <property type="match status" value="1"/>
</dbReference>
<dbReference type="PANTHER" id="PTHR20941">
    <property type="entry name" value="FOLATE SYNTHESIS PROTEINS"/>
    <property type="match status" value="1"/>
</dbReference>
<dbReference type="PANTHER" id="PTHR20941:SF1">
    <property type="entry name" value="FOLIC ACID SYNTHESIS PROTEIN FOL1"/>
    <property type="match status" value="1"/>
</dbReference>
<dbReference type="Pfam" id="PF00809">
    <property type="entry name" value="Pterin_bind"/>
    <property type="match status" value="1"/>
</dbReference>
<dbReference type="SUPFAM" id="SSF51717">
    <property type="entry name" value="Dihydropteroate synthetase-like"/>
    <property type="match status" value="1"/>
</dbReference>
<dbReference type="PROSITE" id="PS00792">
    <property type="entry name" value="DHPS_1"/>
    <property type="match status" value="1"/>
</dbReference>
<dbReference type="PROSITE" id="PS00793">
    <property type="entry name" value="DHPS_2"/>
    <property type="match status" value="1"/>
</dbReference>
<dbReference type="PROSITE" id="PS50972">
    <property type="entry name" value="PTERIN_BINDING"/>
    <property type="match status" value="1"/>
</dbReference>
<name>DHPS_STRP6</name>
<evidence type="ECO:0000250" key="1"/>
<evidence type="ECO:0000250" key="2">
    <source>
        <dbReference type="UniProtKB" id="P0AC13"/>
    </source>
</evidence>
<evidence type="ECO:0000250" key="3">
    <source>
        <dbReference type="UniProtKB" id="P9WND1"/>
    </source>
</evidence>
<evidence type="ECO:0000255" key="4">
    <source>
        <dbReference type="PROSITE-ProRule" id="PRU00334"/>
    </source>
</evidence>
<evidence type="ECO:0000305" key="5"/>
<gene>
    <name type="primary">folP</name>
    <name type="ordered locus">M6_Spy0820</name>
</gene>
<proteinExistence type="evidence at protein level"/>
<keyword id="KW-0903">Direct protein sequencing</keyword>
<keyword id="KW-0289">Folate biosynthesis</keyword>
<keyword id="KW-0460">Magnesium</keyword>
<keyword id="KW-0479">Metal-binding</keyword>
<keyword id="KW-0808">Transferase</keyword>
<protein>
    <recommendedName>
        <fullName>Dihydropteroate synthase</fullName>
        <shortName>DHPS</shortName>
        <ecNumber>2.5.1.15</ecNumber>
    </recommendedName>
    <alternativeName>
        <fullName>Dihydropteroate pyrophosphorylase</fullName>
    </alternativeName>
</protein>
<organism>
    <name type="scientific">Streptococcus pyogenes serotype M6 (strain ATCC BAA-946 / MGAS10394)</name>
    <dbReference type="NCBI Taxonomy" id="286636"/>
    <lineage>
        <taxon>Bacteria</taxon>
        <taxon>Bacillati</taxon>
        <taxon>Bacillota</taxon>
        <taxon>Bacilli</taxon>
        <taxon>Lactobacillales</taxon>
        <taxon>Streptococcaceae</taxon>
        <taxon>Streptococcus</taxon>
    </lineage>
</organism>
<accession>Q5XCA8</accession>
<reference key="1">
    <citation type="journal article" date="2004" name="J. Infect. Dis.">
        <title>Progress toward characterization of the group A Streptococcus metagenome: complete genome sequence of a macrolide-resistant serotype M6 strain.</title>
        <authorList>
            <person name="Banks D.J."/>
            <person name="Porcella S.F."/>
            <person name="Barbian K.D."/>
            <person name="Beres S.B."/>
            <person name="Philips L.E."/>
            <person name="Voyich J.M."/>
            <person name="DeLeo F.R."/>
            <person name="Martin J.M."/>
            <person name="Somerville G.A."/>
            <person name="Musser J.M."/>
        </authorList>
    </citation>
    <scope>NUCLEOTIDE SEQUENCE [LARGE SCALE GENOMIC DNA]</scope>
    <source>
        <strain>ATCC BAA-946 / MGAS10394</strain>
    </source>
</reference>
<reference key="2">
    <citation type="submission" date="2000-05" db="UniProtKB">
        <title>Two-dimensional gel electrophoresis map of Streptococcus pyogenes proteins.</title>
        <authorList>
            <person name="Hogan D.A."/>
            <person name="Du P."/>
            <person name="Stevenson T.I."/>
            <person name="Whitton M."/>
            <person name="Kilby G.W."/>
            <person name="Rogers J."/>
            <person name="VanBogelen R.A."/>
        </authorList>
    </citation>
    <scope>PROTEIN SEQUENCE OF 1-12; 37-50; 81-96; 160-170; 214-224 AND 229-242</scope>
    <source>
        <strain>JRS4 / Serotype M6</strain>
    </source>
</reference>
<sequence>MKIGKFVIEGNAAIMGILNVTPDSFSDGGSYTTVQKALDHVEQMIADGAKIIDVGGESTRPGCQFVSATDEIDRVVPVIKAIKENYDILISIDTYKTETARAALEAGADILNDVWAGLYDGQMFALAAEYDAPIILMHNQDEEVYQEVTQDVCDFLGNRAQAALDAGVPKNNIWIDPGFGFAKSVQQNMELLKGLDRVCQLGYPVLFGISRKRVVDALLGGNTKAKERDGATAALSAYALGKGCQIVRVHDVKANQDIVAVLSQLM</sequence>
<feature type="chain" id="PRO_0000168235" description="Dihydropteroate synthase">
    <location>
        <begin position="1"/>
        <end position="266"/>
    </location>
</feature>
<feature type="domain" description="Pterin-binding" evidence="4">
    <location>
        <begin position="12"/>
        <end position="260"/>
    </location>
</feature>
<feature type="binding site" evidence="3">
    <location>
        <position position="19"/>
    </location>
    <ligand>
        <name>Mg(2+)</name>
        <dbReference type="ChEBI" id="CHEBI:18420"/>
    </ligand>
</feature>
<feature type="binding site" evidence="2">
    <location>
        <position position="59"/>
    </location>
    <ligand>
        <name>(7,8-dihydropterin-6-yl)methyl diphosphate</name>
        <dbReference type="ChEBI" id="CHEBI:72950"/>
    </ligand>
</feature>
<feature type="binding site" evidence="2">
    <location>
        <position position="93"/>
    </location>
    <ligand>
        <name>(7,8-dihydropterin-6-yl)methyl diphosphate</name>
        <dbReference type="ChEBI" id="CHEBI:72950"/>
    </ligand>
</feature>
<feature type="binding site" evidence="2">
    <location>
        <position position="112"/>
    </location>
    <ligand>
        <name>(7,8-dihydropterin-6-yl)methyl diphosphate</name>
        <dbReference type="ChEBI" id="CHEBI:72950"/>
    </ligand>
</feature>
<feature type="binding site" evidence="2">
    <location>
        <position position="176"/>
    </location>
    <ligand>
        <name>(7,8-dihydropterin-6-yl)methyl diphosphate</name>
        <dbReference type="ChEBI" id="CHEBI:72950"/>
    </ligand>
</feature>
<feature type="binding site" evidence="2">
    <location>
        <position position="212"/>
    </location>
    <ligand>
        <name>(7,8-dihydropterin-6-yl)methyl diphosphate</name>
        <dbReference type="ChEBI" id="CHEBI:72950"/>
    </ligand>
</feature>
<feature type="binding site" evidence="2">
    <location>
        <begin position="248"/>
        <end position="250"/>
    </location>
    <ligand>
        <name>(7,8-dihydropterin-6-yl)methyl diphosphate</name>
        <dbReference type="ChEBI" id="CHEBI:72950"/>
    </ligand>
</feature>
<comment type="function">
    <text evidence="2">Catalyzes the condensation of para-aminobenzoate (pABA) with 6-hydroxymethyl-7,8-dihydropterin diphosphate (DHPt-PP) to form 7,8-dihydropteroate (H2Pte), the immediate precursor of folate derivatives.</text>
</comment>
<comment type="catalytic activity">
    <reaction evidence="2">
        <text>(7,8-dihydropterin-6-yl)methyl diphosphate + 4-aminobenzoate = 7,8-dihydropteroate + diphosphate</text>
        <dbReference type="Rhea" id="RHEA:19949"/>
        <dbReference type="ChEBI" id="CHEBI:17836"/>
        <dbReference type="ChEBI" id="CHEBI:17839"/>
        <dbReference type="ChEBI" id="CHEBI:33019"/>
        <dbReference type="ChEBI" id="CHEBI:72950"/>
        <dbReference type="EC" id="2.5.1.15"/>
    </reaction>
</comment>
<comment type="cofactor">
    <cofactor evidence="2">
        <name>Mg(2+)</name>
        <dbReference type="ChEBI" id="CHEBI:18420"/>
    </cofactor>
</comment>
<comment type="pathway">
    <text>Cofactor biosynthesis; tetrahydrofolate biosynthesis; 7,8-dihydrofolate from 2-amino-4-hydroxy-6-hydroxymethyl-7,8-dihydropteridine diphosphate and 4-aminobenzoate: step 1/2.</text>
</comment>
<comment type="subunit">
    <text evidence="1">Homodimer or homotrimer.</text>
</comment>
<comment type="similarity">
    <text evidence="5">Belongs to the DHPS family.</text>
</comment>